<dbReference type="EMBL" id="BC102128">
    <property type="protein sequence ID" value="AAI02129.1"/>
    <property type="molecule type" value="mRNA"/>
</dbReference>
<dbReference type="EMBL" id="X61997">
    <property type="protein sequence ID" value="CAA43970.1"/>
    <property type="molecule type" value="mRNA"/>
</dbReference>
<dbReference type="PIR" id="S16967">
    <property type="entry name" value="S16967"/>
</dbReference>
<dbReference type="RefSeq" id="NP_001035578.1">
    <property type="nucleotide sequence ID" value="NM_001040488.2"/>
</dbReference>
<dbReference type="PDB" id="5LC5">
    <property type="method" value="EM"/>
    <property type="resolution" value="4.35 A"/>
    <property type="chains" value="T=76-150, U=72-156"/>
</dbReference>
<dbReference type="PDB" id="5LDW">
    <property type="method" value="EM"/>
    <property type="resolution" value="4.27 A"/>
    <property type="chains" value="T/U=69-156"/>
</dbReference>
<dbReference type="PDB" id="5LDX">
    <property type="method" value="EM"/>
    <property type="resolution" value="5.60 A"/>
    <property type="chains" value="T/U=69-156"/>
</dbReference>
<dbReference type="PDB" id="5O31">
    <property type="method" value="EM"/>
    <property type="resolution" value="4.13 A"/>
    <property type="chains" value="T/U=69-156"/>
</dbReference>
<dbReference type="PDB" id="7DGQ">
    <property type="method" value="EM"/>
    <property type="resolution" value="5.00 A"/>
    <property type="chains" value="M/W=71-156"/>
</dbReference>
<dbReference type="PDB" id="7DGR">
    <property type="method" value="EM"/>
    <property type="resolution" value="4.60 A"/>
    <property type="chains" value="M/W=69-156"/>
</dbReference>
<dbReference type="PDB" id="7DGS">
    <property type="method" value="EM"/>
    <property type="resolution" value="7.80 A"/>
    <property type="chains" value="M/W=69-156"/>
</dbReference>
<dbReference type="PDB" id="7DGZ">
    <property type="method" value="EM"/>
    <property type="resolution" value="3.80 A"/>
    <property type="chains" value="M/W=69-156"/>
</dbReference>
<dbReference type="PDB" id="7DH0">
    <property type="method" value="EM"/>
    <property type="resolution" value="4.20 A"/>
    <property type="chains" value="M/W=69-156"/>
</dbReference>
<dbReference type="PDB" id="7DKF">
    <property type="method" value="EM"/>
    <property type="resolution" value="8.30 A"/>
    <property type="chains" value="M2/W2=69-156"/>
</dbReference>
<dbReference type="PDB" id="7QSD">
    <property type="method" value="EM"/>
    <property type="resolution" value="3.10 A"/>
    <property type="chains" value="T/U=1-156"/>
</dbReference>
<dbReference type="PDB" id="7QSK">
    <property type="method" value="EM"/>
    <property type="resolution" value="2.84 A"/>
    <property type="chains" value="T/U=1-156"/>
</dbReference>
<dbReference type="PDB" id="7QSL">
    <property type="method" value="EM"/>
    <property type="resolution" value="2.76 A"/>
    <property type="chains" value="T/U=1-156"/>
</dbReference>
<dbReference type="PDB" id="7QSM">
    <property type="method" value="EM"/>
    <property type="resolution" value="2.30 A"/>
    <property type="chains" value="T/U=1-156"/>
</dbReference>
<dbReference type="PDB" id="7QSN">
    <property type="method" value="EM"/>
    <property type="resolution" value="2.81 A"/>
    <property type="chains" value="T/U=1-156"/>
</dbReference>
<dbReference type="PDB" id="7QSO">
    <property type="method" value="EM"/>
    <property type="resolution" value="3.02 A"/>
    <property type="chains" value="T/U=1-156"/>
</dbReference>
<dbReference type="PDB" id="7R41">
    <property type="method" value="EM"/>
    <property type="resolution" value="2.30 A"/>
    <property type="chains" value="T/U=1-156"/>
</dbReference>
<dbReference type="PDB" id="7R42">
    <property type="method" value="EM"/>
    <property type="resolution" value="2.30 A"/>
    <property type="chains" value="T/U=1-156"/>
</dbReference>
<dbReference type="PDB" id="7R43">
    <property type="method" value="EM"/>
    <property type="resolution" value="2.40 A"/>
    <property type="chains" value="T/U=1-156"/>
</dbReference>
<dbReference type="PDB" id="7R44">
    <property type="method" value="EM"/>
    <property type="resolution" value="2.40 A"/>
    <property type="chains" value="T/U=1-156"/>
</dbReference>
<dbReference type="PDB" id="7R45">
    <property type="method" value="EM"/>
    <property type="resolution" value="2.40 A"/>
    <property type="chains" value="T/U=1-156"/>
</dbReference>
<dbReference type="PDB" id="7R46">
    <property type="method" value="EM"/>
    <property type="resolution" value="2.40 A"/>
    <property type="chains" value="T/U=1-156"/>
</dbReference>
<dbReference type="PDB" id="7R47">
    <property type="method" value="EM"/>
    <property type="resolution" value="2.30 A"/>
    <property type="chains" value="T/U=1-156"/>
</dbReference>
<dbReference type="PDB" id="7R48">
    <property type="method" value="EM"/>
    <property type="resolution" value="2.30 A"/>
    <property type="chains" value="T/U=1-156"/>
</dbReference>
<dbReference type="PDB" id="7R4C">
    <property type="method" value="EM"/>
    <property type="resolution" value="2.30 A"/>
    <property type="chains" value="T/U=1-156"/>
</dbReference>
<dbReference type="PDB" id="7R4D">
    <property type="method" value="EM"/>
    <property type="resolution" value="2.30 A"/>
    <property type="chains" value="T/U=1-156"/>
</dbReference>
<dbReference type="PDB" id="7R4F">
    <property type="method" value="EM"/>
    <property type="resolution" value="2.40 A"/>
    <property type="chains" value="T/U=1-156"/>
</dbReference>
<dbReference type="PDB" id="7R4G">
    <property type="method" value="EM"/>
    <property type="resolution" value="2.50 A"/>
    <property type="chains" value="T/U=1-156"/>
</dbReference>
<dbReference type="PDB" id="8Q0A">
    <property type="method" value="EM"/>
    <property type="resolution" value="3.10 A"/>
    <property type="chains" value="T/U=1-156"/>
</dbReference>
<dbReference type="PDB" id="8Q0F">
    <property type="method" value="EM"/>
    <property type="resolution" value="3.10 A"/>
    <property type="chains" value="T/U=1-156"/>
</dbReference>
<dbReference type="PDB" id="8Q0J">
    <property type="method" value="EM"/>
    <property type="resolution" value="3.80 A"/>
    <property type="chains" value="T/U=1-156"/>
</dbReference>
<dbReference type="PDB" id="8Q0M">
    <property type="method" value="EM"/>
    <property type="resolution" value="3.10 A"/>
    <property type="chains" value="T/U=1-156"/>
</dbReference>
<dbReference type="PDB" id="8Q0O">
    <property type="method" value="EM"/>
    <property type="resolution" value="3.10 A"/>
    <property type="chains" value="T/U=1-156"/>
</dbReference>
<dbReference type="PDB" id="8Q0Q">
    <property type="method" value="EM"/>
    <property type="resolution" value="3.60 A"/>
    <property type="chains" value="T/U=1-156"/>
</dbReference>
<dbReference type="PDB" id="8Q1P">
    <property type="method" value="EM"/>
    <property type="resolution" value="2.90 A"/>
    <property type="chains" value="T/U=1-156"/>
</dbReference>
<dbReference type="PDB" id="8Q1U">
    <property type="method" value="EM"/>
    <property type="resolution" value="3.30 A"/>
    <property type="chains" value="T/U=1-156"/>
</dbReference>
<dbReference type="PDB" id="8Q1Y">
    <property type="method" value="EM"/>
    <property type="resolution" value="2.60 A"/>
    <property type="chains" value="T/U=1-156"/>
</dbReference>
<dbReference type="PDB" id="8Q25">
    <property type="method" value="EM"/>
    <property type="resolution" value="2.80 A"/>
    <property type="chains" value="T/U=1-156"/>
</dbReference>
<dbReference type="PDB" id="8Q45">
    <property type="method" value="EM"/>
    <property type="resolution" value="2.70 A"/>
    <property type="chains" value="T/U=1-156"/>
</dbReference>
<dbReference type="PDB" id="8Q46">
    <property type="method" value="EM"/>
    <property type="resolution" value="2.60 A"/>
    <property type="chains" value="T/U=1-156"/>
</dbReference>
<dbReference type="PDB" id="8Q47">
    <property type="method" value="EM"/>
    <property type="resolution" value="2.90 A"/>
    <property type="chains" value="T/U=1-156"/>
</dbReference>
<dbReference type="PDB" id="8Q48">
    <property type="method" value="EM"/>
    <property type="resolution" value="2.50 A"/>
    <property type="chains" value="T/U=1-156"/>
</dbReference>
<dbReference type="PDB" id="8Q49">
    <property type="method" value="EM"/>
    <property type="resolution" value="2.60 A"/>
    <property type="chains" value="T/U=1-156"/>
</dbReference>
<dbReference type="PDB" id="8Q4A">
    <property type="method" value="EM"/>
    <property type="resolution" value="2.60 A"/>
    <property type="chains" value="T/U=1-156"/>
</dbReference>
<dbReference type="PDBsum" id="5LC5"/>
<dbReference type="PDBsum" id="5LDW"/>
<dbReference type="PDBsum" id="5LDX"/>
<dbReference type="PDBsum" id="5O31"/>
<dbReference type="PDBsum" id="7DGQ"/>
<dbReference type="PDBsum" id="7DGR"/>
<dbReference type="PDBsum" id="7DGS"/>
<dbReference type="PDBsum" id="7DGZ"/>
<dbReference type="PDBsum" id="7DH0"/>
<dbReference type="PDBsum" id="7DKF"/>
<dbReference type="PDBsum" id="7QSD"/>
<dbReference type="PDBsum" id="7QSK"/>
<dbReference type="PDBsum" id="7QSL"/>
<dbReference type="PDBsum" id="7QSM"/>
<dbReference type="PDBsum" id="7QSN"/>
<dbReference type="PDBsum" id="7QSO"/>
<dbReference type="PDBsum" id="7R41"/>
<dbReference type="PDBsum" id="7R42"/>
<dbReference type="PDBsum" id="7R43"/>
<dbReference type="PDBsum" id="7R44"/>
<dbReference type="PDBsum" id="7R45"/>
<dbReference type="PDBsum" id="7R46"/>
<dbReference type="PDBsum" id="7R47"/>
<dbReference type="PDBsum" id="7R48"/>
<dbReference type="PDBsum" id="7R4C"/>
<dbReference type="PDBsum" id="7R4D"/>
<dbReference type="PDBsum" id="7R4F"/>
<dbReference type="PDBsum" id="7R4G"/>
<dbReference type="PDBsum" id="8Q0A"/>
<dbReference type="PDBsum" id="8Q0F"/>
<dbReference type="PDBsum" id="8Q0J"/>
<dbReference type="PDBsum" id="8Q0M"/>
<dbReference type="PDBsum" id="8Q0O"/>
<dbReference type="PDBsum" id="8Q0Q"/>
<dbReference type="PDBsum" id="8Q1P"/>
<dbReference type="PDBsum" id="8Q1U"/>
<dbReference type="PDBsum" id="8Q1Y"/>
<dbReference type="PDBsum" id="8Q25"/>
<dbReference type="PDBsum" id="8Q45"/>
<dbReference type="PDBsum" id="8Q46"/>
<dbReference type="PDBsum" id="8Q47"/>
<dbReference type="PDBsum" id="8Q48"/>
<dbReference type="PDBsum" id="8Q49"/>
<dbReference type="PDBsum" id="8Q4A"/>
<dbReference type="EMDB" id="EMD-14127"/>
<dbReference type="EMDB" id="EMD-14132"/>
<dbReference type="EMDB" id="EMD-14133"/>
<dbReference type="EMDB" id="EMD-14134"/>
<dbReference type="EMDB" id="EMD-14139"/>
<dbReference type="EMDB" id="EMD-14140"/>
<dbReference type="EMDB" id="EMD-14251"/>
<dbReference type="EMDB" id="EMD-14256"/>
<dbReference type="EMDB" id="EMD-14261"/>
<dbReference type="EMDB" id="EMD-14266"/>
<dbReference type="EMDB" id="EMD-14272"/>
<dbReference type="EMDB" id="EMD-14277"/>
<dbReference type="EMDB" id="EMD-14282"/>
<dbReference type="EMDB" id="EMD-14287"/>
<dbReference type="EMDB" id="EMD-14292"/>
<dbReference type="EMDB" id="EMD-14297"/>
<dbReference type="EMDB" id="EMD-14302"/>
<dbReference type="EMDB" id="EMD-14307"/>
<dbReference type="EMDB" id="EMD-18051"/>
<dbReference type="EMDB" id="EMD-18052"/>
<dbReference type="EMDB" id="EMD-18054"/>
<dbReference type="EMDB" id="EMD-18055"/>
<dbReference type="EMDB" id="EMD-18057"/>
<dbReference type="EMDB" id="EMD-18059"/>
<dbReference type="EMDB" id="EMD-18066"/>
<dbReference type="EMDB" id="EMD-18067"/>
<dbReference type="EMDB" id="EMD-18068"/>
<dbReference type="EMDB" id="EMD-18069"/>
<dbReference type="EMDB" id="EMD-18138"/>
<dbReference type="EMDB" id="EMD-18139"/>
<dbReference type="EMDB" id="EMD-18140"/>
<dbReference type="EMDB" id="EMD-18141"/>
<dbReference type="EMDB" id="EMD-18142"/>
<dbReference type="EMDB" id="EMD-18143"/>
<dbReference type="EMDB" id="EMD-30673"/>
<dbReference type="EMDB" id="EMD-30674"/>
<dbReference type="EMDB" id="EMD-30675"/>
<dbReference type="EMDB" id="EMD-30676"/>
<dbReference type="EMDB" id="EMD-30677"/>
<dbReference type="EMDB" id="EMD-30706"/>
<dbReference type="EMDB" id="EMD-3731"/>
<dbReference type="EMDB" id="EMD-4032"/>
<dbReference type="EMDB" id="EMD-4040"/>
<dbReference type="EMDB" id="EMD-4041"/>
<dbReference type="SMR" id="P52505"/>
<dbReference type="CORUM" id="P52505"/>
<dbReference type="DIP" id="DIP-38826N"/>
<dbReference type="FunCoup" id="P52505">
    <property type="interactions" value="2550"/>
</dbReference>
<dbReference type="IntAct" id="P52505">
    <property type="interactions" value="42"/>
</dbReference>
<dbReference type="STRING" id="9913.ENSBTAP00000008382"/>
<dbReference type="BindingDB" id="P52505"/>
<dbReference type="ChEMBL" id="CHEMBL614865"/>
<dbReference type="TCDB" id="3.D.1.6.1">
    <property type="family name" value="the h+ or na+-translocating nadh dehydrogenase (ndh) family"/>
</dbReference>
<dbReference type="PaxDb" id="9913-ENSBTAP00000008382"/>
<dbReference type="PeptideAtlas" id="P52505"/>
<dbReference type="GeneID" id="327702"/>
<dbReference type="KEGG" id="bta:327702"/>
<dbReference type="CTD" id="4706"/>
<dbReference type="eggNOG" id="KOG1748">
    <property type="taxonomic scope" value="Eukaryota"/>
</dbReference>
<dbReference type="InParanoid" id="P52505"/>
<dbReference type="OrthoDB" id="448946at2759"/>
<dbReference type="PRO" id="PR:P52505"/>
<dbReference type="Proteomes" id="UP000009136">
    <property type="component" value="Unplaced"/>
</dbReference>
<dbReference type="GO" id="GO:0005759">
    <property type="term" value="C:mitochondrial matrix"/>
    <property type="evidence" value="ECO:0000314"/>
    <property type="project" value="AgBase"/>
</dbReference>
<dbReference type="GO" id="GO:0031966">
    <property type="term" value="C:mitochondrial membrane"/>
    <property type="evidence" value="ECO:0000314"/>
    <property type="project" value="AgBase"/>
</dbReference>
<dbReference type="GO" id="GO:0005739">
    <property type="term" value="C:mitochondrion"/>
    <property type="evidence" value="ECO:0000318"/>
    <property type="project" value="GO_Central"/>
</dbReference>
<dbReference type="GO" id="GO:0045271">
    <property type="term" value="C:respiratory chain complex I"/>
    <property type="evidence" value="ECO:0000314"/>
    <property type="project" value="UniProtKB"/>
</dbReference>
<dbReference type="GO" id="GO:0000035">
    <property type="term" value="F:acyl binding"/>
    <property type="evidence" value="ECO:0000318"/>
    <property type="project" value="GO_Central"/>
</dbReference>
<dbReference type="GO" id="GO:0000036">
    <property type="term" value="F:acyl carrier activity"/>
    <property type="evidence" value="ECO:0000318"/>
    <property type="project" value="GO_Central"/>
</dbReference>
<dbReference type="GO" id="GO:0005504">
    <property type="term" value="F:fatty acid binding"/>
    <property type="evidence" value="ECO:0000314"/>
    <property type="project" value="AgBase"/>
</dbReference>
<dbReference type="GO" id="GO:0140978">
    <property type="term" value="F:mitochondrial large ribosomal subunit binding"/>
    <property type="evidence" value="ECO:0000250"/>
    <property type="project" value="UniProtKB"/>
</dbReference>
<dbReference type="GO" id="GO:0008137">
    <property type="term" value="F:NADH dehydrogenase (ubiquinone) activity"/>
    <property type="evidence" value="ECO:0000304"/>
    <property type="project" value="AgBase"/>
</dbReference>
<dbReference type="GO" id="GO:0016491">
    <property type="term" value="F:oxidoreductase activity"/>
    <property type="evidence" value="ECO:0000304"/>
    <property type="project" value="AgBase"/>
</dbReference>
<dbReference type="GO" id="GO:0044571">
    <property type="term" value="P:[2Fe-2S] cluster assembly"/>
    <property type="evidence" value="ECO:0000250"/>
    <property type="project" value="UniProtKB"/>
</dbReference>
<dbReference type="GO" id="GO:0006633">
    <property type="term" value="P:fatty acid biosynthetic process"/>
    <property type="evidence" value="ECO:0000304"/>
    <property type="project" value="AgBase"/>
</dbReference>
<dbReference type="GO" id="GO:0006120">
    <property type="term" value="P:mitochondrial electron transport, NADH to ubiquinone"/>
    <property type="evidence" value="ECO:0000304"/>
    <property type="project" value="AgBase"/>
</dbReference>
<dbReference type="FunFam" id="1.10.1200.10:FF:000008">
    <property type="entry name" value="Acyl carrier protein"/>
    <property type="match status" value="1"/>
</dbReference>
<dbReference type="Gene3D" id="1.10.1200.10">
    <property type="entry name" value="ACP-like"/>
    <property type="match status" value="1"/>
</dbReference>
<dbReference type="HAMAP" id="MF_01217">
    <property type="entry name" value="Acyl_carrier"/>
    <property type="match status" value="1"/>
</dbReference>
<dbReference type="InterPro" id="IPR003231">
    <property type="entry name" value="ACP"/>
</dbReference>
<dbReference type="InterPro" id="IPR036736">
    <property type="entry name" value="ACP-like_sf"/>
</dbReference>
<dbReference type="InterPro" id="IPR009081">
    <property type="entry name" value="PP-bd_ACP"/>
</dbReference>
<dbReference type="InterPro" id="IPR006162">
    <property type="entry name" value="Ppantetheine_attach_site"/>
</dbReference>
<dbReference type="NCBIfam" id="TIGR00517">
    <property type="entry name" value="acyl_carrier"/>
    <property type="match status" value="1"/>
</dbReference>
<dbReference type="NCBIfam" id="NF002148">
    <property type="entry name" value="PRK00982.1-2"/>
    <property type="match status" value="1"/>
</dbReference>
<dbReference type="PANTHER" id="PTHR20863">
    <property type="entry name" value="ACYL CARRIER PROTEIN"/>
    <property type="match status" value="1"/>
</dbReference>
<dbReference type="PANTHER" id="PTHR20863:SF28">
    <property type="entry name" value="ACYL CARRIER PROTEIN, MITOCHONDRIAL"/>
    <property type="match status" value="1"/>
</dbReference>
<dbReference type="Pfam" id="PF00550">
    <property type="entry name" value="PP-binding"/>
    <property type="match status" value="1"/>
</dbReference>
<dbReference type="SUPFAM" id="SSF47336">
    <property type="entry name" value="ACP-like"/>
    <property type="match status" value="1"/>
</dbReference>
<dbReference type="PROSITE" id="PS50075">
    <property type="entry name" value="CARRIER"/>
    <property type="match status" value="1"/>
</dbReference>
<dbReference type="PROSITE" id="PS00012">
    <property type="entry name" value="PHOSPHOPANTETHEINE"/>
    <property type="match status" value="1"/>
</dbReference>
<reference key="1">
    <citation type="submission" date="2005-08" db="EMBL/GenBank/DDBJ databases">
        <authorList>
            <consortium name="NIH - Mammalian Gene Collection (MGC) project"/>
        </authorList>
    </citation>
    <scope>NUCLEOTIDE SEQUENCE [LARGE SCALE MRNA]</scope>
    <source>
        <strain>Crossbred X Angus</strain>
        <tissue>Ileum</tissue>
    </source>
</reference>
<reference key="2">
    <citation type="journal article" date="1991" name="FEBS Lett.">
        <title>Presence of an acyl carrier protein in NADH:ubiquinone oxidoreductase from bovine heart mitochondria.</title>
        <authorList>
            <person name="Runswick M.J."/>
            <person name="Fearnley I.M."/>
            <person name="Skehel J.M."/>
            <person name="Walker J.E."/>
        </authorList>
    </citation>
    <scope>NUCLEOTIDE SEQUENCE [MRNA] OF 69-156</scope>
    <scope>PROTEIN SEQUENCE OF 69-90</scope>
    <scope>SUBCELLULAR LOCATION</scope>
    <scope>MASS SPECTROMETRY</scope>
    <scope>FUNCTION</scope>
    <scope>PHOSPHOPANTETHEINYLATION AT SER-112</scope>
    <source>
        <tissue>Heart</tissue>
    </source>
</reference>
<reference key="3">
    <citation type="journal article" date="2000" name="Biochemistry">
        <title>Resolution of the membrane domain of bovine complex I into subcomplexes: implications for the structural organization of the enzyme.</title>
        <authorList>
            <person name="Sazanov L.A."/>
            <person name="Peak-Chew S.Y."/>
            <person name="Fearnley I.M."/>
            <person name="Walker J.E."/>
        </authorList>
    </citation>
    <scope>PARTIAL PROTEIN SEQUENCE</scope>
    <scope>FUNCTION</scope>
    <scope>SUBUNIT</scope>
    <scope>IDENTIFICATION IN COMPLEX I</scope>
    <scope>SUBCELLULAR LOCATION</scope>
</reference>
<reference key="4">
    <citation type="journal article" date="2008" name="Anal. Biochem.">
        <title>Subunit analysis of bovine heart complex I by reversed-phase high-performance liquid chromatography, electrospray ionization-tandem mass spectrometry, and matrix-assisted laser desorption/ionization-time-of-flight mass spectrometry.</title>
        <authorList>
            <person name="Lemma-Gray P."/>
            <person name="Valusova E."/>
            <person name="Carroll C.A."/>
            <person name="Weintraub S.T."/>
            <person name="Musatov A."/>
            <person name="Robinson N.C."/>
        </authorList>
    </citation>
    <scope>FUNCTION</scope>
    <scope>SUBUNIT</scope>
    <scope>IDENTIFICATION IN COMPLEX I</scope>
    <scope>SUBCELLULAR LOCATION</scope>
</reference>
<comment type="function">
    <text evidence="1 3 5 6 7">Carrier of the growing fatty acid chain in fatty acid biosynthesis (PubMed:1907568). Accessory and non-catalytic subunit of the mitochondrial membrane respiratory chain NADH dehydrogenase (Complex I), which functions in the transfer of electrons from NADH to the respiratory chain (PubMed:10852722, PubMed:18721790, PubMed:1907568). Accessory protein, of the core iron-sulfur cluster (ISC) assembly complex, that regulates, in association with LYRM4, the stability and the cysteine desulfurase activity of NFS1 and participates in the [2Fe-2S] clusters assembly on the scaffolding protein ISCU (By similarity). The core iron-sulfur cluster (ISC) assembly complex is involved in the de novo synthesis of a [2Fe-2S] cluster, the first step of the mitochondrial iron-sulfur protein biogenesis. This process is initiated by the cysteine desulfurase complex (NFS1:LYRM4:NDUFAB1) that produces persulfide which is delivered on the scaffold protein ISCU in a FXN-dependent manner. Then this complex is stabilized by FDX2 which provides reducing equivalents to accomplish the [2Fe-2S] cluster assembly. Finally, the [2Fe-2S] cluster is transferred from ISCU to chaperone proteins, including HSCB, HSPA9 and GLRX5 (By similarity).</text>
</comment>
<comment type="subunit">
    <text evidence="1 5 6">Mammalian complex I is composed of 45 different subunits (PubMed:10852722, PubMed:18721790). Interacts with ETFRF1. Identified in a complex composed of MALSU1, MIEF1 upstream open reading frame protein and NDUFAB1; within the trimeric complex MIEF1 upstream open reading frame protein functions as a bridging scaffold that interacts with MALSU1 on one side, and with NDUFAB1 on the other side. The complex interacts with the mitochondrial large ribosomal subunit (By similarity). Interacts with alpha-1-microglobulin chain; this interaction is required for the maintenance of mitochondrial redox homeostasis. Component of the mitochondrial core iron-sulfur cluster (ISC) complex composed of NFS1, LYRM4, NDUFAB1, ISCU, FXN, and FDX2; this complex is a heterohexamer containing two copies of each monomer. Component of the cyteine desulfurase complex composed of NFS1, LYRM4 and NDUFAB1; this complex contributes to the stability and cysteine desulfurase activity of NFS1 (By similarity).</text>
</comment>
<comment type="subcellular location">
    <subcellularLocation>
        <location evidence="7 9">Mitochondrion</location>
    </subcellularLocation>
</comment>
<comment type="PTM">
    <text evidence="7">Phosphopantetheinylation at Ser-112 is essential for interactions with LYR motif-containing proteins.</text>
</comment>
<comment type="mass spectrometry" mass="10751.6" method="Electrospray" evidence="7"/>
<comment type="similarity">
    <text evidence="8">Belongs to the acyl carrier protein (ACP) family.</text>
</comment>
<proteinExistence type="evidence at protein level"/>
<gene>
    <name evidence="1" type="primary">NDUFAB1</name>
</gene>
<feature type="transit peptide" description="Mitochondrion" evidence="7">
    <location>
        <begin position="1"/>
        <end position="68"/>
    </location>
</feature>
<feature type="chain" id="PRO_0000180271" description="Acyl carrier protein, mitochondrial">
    <location>
        <begin position="69"/>
        <end position="156"/>
    </location>
</feature>
<feature type="domain" description="Carrier" evidence="4">
    <location>
        <begin position="77"/>
        <end position="152"/>
    </location>
</feature>
<feature type="modified residue" description="N6-acetyllysine" evidence="2">
    <location>
        <position position="88"/>
    </location>
</feature>
<feature type="modified residue" description="O-(pantetheine 4'-phosphoryl)serine" evidence="4 10">
    <location>
        <position position="112"/>
    </location>
</feature>
<feature type="helix" evidence="11">
    <location>
        <begin position="76"/>
        <end position="89"/>
    </location>
</feature>
<feature type="strand" evidence="12">
    <location>
        <begin position="91"/>
        <end position="93"/>
    </location>
</feature>
<feature type="turn" evidence="11">
    <location>
        <begin position="95"/>
        <end position="97"/>
    </location>
</feature>
<feature type="turn" evidence="11">
    <location>
        <begin position="104"/>
        <end position="108"/>
    </location>
</feature>
<feature type="helix" evidence="11">
    <location>
        <begin position="112"/>
        <end position="126"/>
    </location>
</feature>
<feature type="helix" evidence="11">
    <location>
        <begin position="132"/>
        <end position="135"/>
    </location>
</feature>
<feature type="helix" evidence="11">
    <location>
        <begin position="141"/>
        <end position="151"/>
    </location>
</feature>
<organism>
    <name type="scientific">Bos taurus</name>
    <name type="common">Bovine</name>
    <dbReference type="NCBI Taxonomy" id="9913"/>
    <lineage>
        <taxon>Eukaryota</taxon>
        <taxon>Metazoa</taxon>
        <taxon>Chordata</taxon>
        <taxon>Craniata</taxon>
        <taxon>Vertebrata</taxon>
        <taxon>Euteleostomi</taxon>
        <taxon>Mammalia</taxon>
        <taxon>Eutheria</taxon>
        <taxon>Laurasiatheria</taxon>
        <taxon>Artiodactyla</taxon>
        <taxon>Ruminantia</taxon>
        <taxon>Pecora</taxon>
        <taxon>Bovidae</taxon>
        <taxon>Bovinae</taxon>
        <taxon>Bos</taxon>
    </lineage>
</organism>
<name>ACPM_BOVIN</name>
<protein>
    <recommendedName>
        <fullName evidence="1">Acyl carrier protein, mitochondrial</fullName>
        <shortName>ACP</shortName>
    </recommendedName>
    <alternativeName>
        <fullName>CI-SDAP</fullName>
    </alternativeName>
    <alternativeName>
        <fullName>NADH-ubiquinone oxidoreductase 9.6 kDa subunit</fullName>
    </alternativeName>
</protein>
<accession>P52505</accession>
<accession>Q3T150</accession>
<keyword id="KW-0002">3D-structure</keyword>
<keyword id="KW-0007">Acetylation</keyword>
<keyword id="KW-0903">Direct protein sequencing</keyword>
<keyword id="KW-0249">Electron transport</keyword>
<keyword id="KW-0275">Fatty acid biosynthesis</keyword>
<keyword id="KW-0276">Fatty acid metabolism</keyword>
<keyword id="KW-0444">Lipid biosynthesis</keyword>
<keyword id="KW-0443">Lipid metabolism</keyword>
<keyword id="KW-0496">Mitochondrion</keyword>
<keyword id="KW-0596">Phosphopantetheine</keyword>
<keyword id="KW-0597">Phosphoprotein</keyword>
<keyword id="KW-1185">Reference proteome</keyword>
<keyword id="KW-0679">Respiratory chain</keyword>
<keyword id="KW-0809">Transit peptide</keyword>
<keyword id="KW-0813">Transport</keyword>
<sequence length="156" mass="17402">MAVRVLCACVRRLPTAFAPLPRLPTLAAARPLSTTLFAAETRTRPGAPLPALVLAQVPGRVTQLCRQYSDAPPLTLEGIKDRVLYVLKLYDKIDPEKLSVNSHFMKDLGLDSLDQVEIIMAMEDEFGFEIPDIDAEKLMCPQEIVDYIADKKDVYE</sequence>
<evidence type="ECO:0000250" key="1">
    <source>
        <dbReference type="UniProtKB" id="O14561"/>
    </source>
</evidence>
<evidence type="ECO:0000250" key="2">
    <source>
        <dbReference type="UniProtKB" id="Q9CR21"/>
    </source>
</evidence>
<evidence type="ECO:0000250" key="3">
    <source>
        <dbReference type="UniProtKB" id="Q9H1K1"/>
    </source>
</evidence>
<evidence type="ECO:0000255" key="4">
    <source>
        <dbReference type="PROSITE-ProRule" id="PRU00258"/>
    </source>
</evidence>
<evidence type="ECO:0000269" key="5">
    <source>
    </source>
</evidence>
<evidence type="ECO:0000269" key="6">
    <source>
    </source>
</evidence>
<evidence type="ECO:0000269" key="7">
    <source>
    </source>
</evidence>
<evidence type="ECO:0000305" key="8"/>
<evidence type="ECO:0000305" key="9">
    <source>
    </source>
</evidence>
<evidence type="ECO:0000305" key="10">
    <source>
    </source>
</evidence>
<evidence type="ECO:0007829" key="11">
    <source>
        <dbReference type="PDB" id="7QSM"/>
    </source>
</evidence>
<evidence type="ECO:0007829" key="12">
    <source>
        <dbReference type="PDB" id="8Q45"/>
    </source>
</evidence>